<organism>
    <name type="scientific">Enterobacter sp. (strain 638)</name>
    <dbReference type="NCBI Taxonomy" id="399742"/>
    <lineage>
        <taxon>Bacteria</taxon>
        <taxon>Pseudomonadati</taxon>
        <taxon>Pseudomonadota</taxon>
        <taxon>Gammaproteobacteria</taxon>
        <taxon>Enterobacterales</taxon>
        <taxon>Enterobacteriaceae</taxon>
        <taxon>Enterobacter</taxon>
    </lineage>
</organism>
<name>LEUE_ENT38</name>
<dbReference type="EMBL" id="CP000653">
    <property type="protein sequence ID" value="ABP60962.1"/>
    <property type="molecule type" value="Genomic_DNA"/>
</dbReference>
<dbReference type="RefSeq" id="WP_012017676.1">
    <property type="nucleotide sequence ID" value="NC_009436.1"/>
</dbReference>
<dbReference type="STRING" id="399742.Ent638_2293"/>
<dbReference type="KEGG" id="ent:Ent638_2293"/>
<dbReference type="eggNOG" id="COG1280">
    <property type="taxonomic scope" value="Bacteria"/>
</dbReference>
<dbReference type="HOGENOM" id="CLU_079569_3_1_6"/>
<dbReference type="OrthoDB" id="9784202at2"/>
<dbReference type="Proteomes" id="UP000000230">
    <property type="component" value="Chromosome"/>
</dbReference>
<dbReference type="GO" id="GO:0005886">
    <property type="term" value="C:plasma membrane"/>
    <property type="evidence" value="ECO:0007669"/>
    <property type="project" value="UniProtKB-SubCell"/>
</dbReference>
<dbReference type="GO" id="GO:0015297">
    <property type="term" value="F:antiporter activity"/>
    <property type="evidence" value="ECO:0007669"/>
    <property type="project" value="UniProtKB-KW"/>
</dbReference>
<dbReference type="GO" id="GO:0015190">
    <property type="term" value="F:L-leucine transmembrane transporter activity"/>
    <property type="evidence" value="ECO:0007669"/>
    <property type="project" value="TreeGrafter"/>
</dbReference>
<dbReference type="GO" id="GO:0015820">
    <property type="term" value="P:L-leucine transport"/>
    <property type="evidence" value="ECO:0007669"/>
    <property type="project" value="TreeGrafter"/>
</dbReference>
<dbReference type="InterPro" id="IPR001123">
    <property type="entry name" value="LeuE-type"/>
</dbReference>
<dbReference type="NCBIfam" id="NF008201">
    <property type="entry name" value="PRK10958.1"/>
    <property type="match status" value="1"/>
</dbReference>
<dbReference type="PANTHER" id="PTHR30086">
    <property type="entry name" value="ARGININE EXPORTER PROTEIN ARGO"/>
    <property type="match status" value="1"/>
</dbReference>
<dbReference type="PANTHER" id="PTHR30086:SF15">
    <property type="entry name" value="LEUCINE EFFLUX PROTEIN"/>
    <property type="match status" value="1"/>
</dbReference>
<dbReference type="Pfam" id="PF01810">
    <property type="entry name" value="LysE"/>
    <property type="match status" value="1"/>
</dbReference>
<dbReference type="PIRSF" id="PIRSF006324">
    <property type="entry name" value="LeuE"/>
    <property type="match status" value="1"/>
</dbReference>
<gene>
    <name type="primary">leuE</name>
    <name type="ordered locus">Ent638_2293</name>
</gene>
<protein>
    <recommendedName>
        <fullName evidence="1">Leucine efflux protein</fullName>
    </recommendedName>
</protein>
<accession>A4WB82</accession>
<feature type="chain" id="PRO_0000316797" description="Leucine efflux protein">
    <location>
        <begin position="1"/>
        <end position="211"/>
    </location>
</feature>
<feature type="transmembrane region" description="Helical" evidence="2">
    <location>
        <begin position="5"/>
        <end position="25"/>
    </location>
</feature>
<feature type="transmembrane region" description="Helical" evidence="2">
    <location>
        <begin position="49"/>
        <end position="69"/>
    </location>
</feature>
<feature type="transmembrane region" description="Helical" evidence="2">
    <location>
        <begin position="72"/>
        <end position="92"/>
    </location>
</feature>
<feature type="transmembrane region" description="Helical" evidence="2">
    <location>
        <begin position="122"/>
        <end position="142"/>
    </location>
</feature>
<feature type="transmembrane region" description="Helical" evidence="2">
    <location>
        <begin position="153"/>
        <end position="173"/>
    </location>
</feature>
<feature type="transmembrane region" description="Helical" evidence="2">
    <location>
        <begin position="191"/>
        <end position="211"/>
    </location>
</feature>
<comment type="function">
    <text evidence="1">Exporter of leucine.</text>
</comment>
<comment type="catalytic activity">
    <reaction evidence="1">
        <text>L-leucine(in) + H(+)(out) = L-leucine(out) + H(+)(in)</text>
        <dbReference type="Rhea" id="RHEA:28731"/>
        <dbReference type="ChEBI" id="CHEBI:15378"/>
        <dbReference type="ChEBI" id="CHEBI:57427"/>
    </reaction>
    <physiologicalReaction direction="left-to-right" evidence="1">
        <dbReference type="Rhea" id="RHEA:28732"/>
    </physiologicalReaction>
</comment>
<comment type="subcellular location">
    <subcellularLocation>
        <location evidence="1">Cell inner membrane</location>
        <topology evidence="2">Multi-pass membrane protein</topology>
    </subcellularLocation>
</comment>
<comment type="similarity">
    <text evidence="3">Belongs to the Rht family.</text>
</comment>
<reference key="1">
    <citation type="journal article" date="2010" name="PLoS Genet.">
        <title>Genome sequence of the plant growth promoting endophytic bacterium Enterobacter sp. 638.</title>
        <authorList>
            <person name="Taghavi S."/>
            <person name="van der Lelie D."/>
            <person name="Hoffman A."/>
            <person name="Zhang Y.B."/>
            <person name="Walla M.D."/>
            <person name="Vangronsveld J."/>
            <person name="Newman L."/>
            <person name="Monchy S."/>
        </authorList>
    </citation>
    <scope>NUCLEOTIDE SEQUENCE [LARGE SCALE GENOMIC DNA]</scope>
    <source>
        <strain>638</strain>
    </source>
</reference>
<sequence>MFAEFGVLNFWTYVVGAFFIVLVPGPNTLFVLKTGIGHGVKKGYLAATGVFIGDAVLMFLAWAGVAALIQTTPVLFNIVRYLGALYLLWLGGKMLWSVIMRKNSAHAGGAEPSSTILKRSLVLSLTNPKAILFYVSFFVQFIDVSATNTGTSFLILATTLELISFMYMSFLIFSGAFVTRYLKTKKKLAKLGNGLIGLLFVGFAARLASLH</sequence>
<proteinExistence type="inferred from homology"/>
<evidence type="ECO:0000250" key="1">
    <source>
        <dbReference type="UniProtKB" id="P76249"/>
    </source>
</evidence>
<evidence type="ECO:0000255" key="2"/>
<evidence type="ECO:0000305" key="3"/>
<keyword id="KW-0029">Amino-acid transport</keyword>
<keyword id="KW-0050">Antiport</keyword>
<keyword id="KW-0997">Cell inner membrane</keyword>
<keyword id="KW-1003">Cell membrane</keyword>
<keyword id="KW-0472">Membrane</keyword>
<keyword id="KW-0812">Transmembrane</keyword>
<keyword id="KW-1133">Transmembrane helix</keyword>
<keyword id="KW-0813">Transport</keyword>